<comment type="subcellular location">
    <subcellularLocation>
        <location evidence="2">Cell membrane</location>
        <topology evidence="2">Single-pass membrane protein</topology>
    </subcellularLocation>
</comment>
<proteinExistence type="predicted"/>
<protein>
    <recommendedName>
        <fullName>Uncharacterized membrane protein YqzM</fullName>
    </recommendedName>
</protein>
<keyword id="KW-1003">Cell membrane</keyword>
<keyword id="KW-0472">Membrane</keyword>
<keyword id="KW-1185">Reference proteome</keyword>
<keyword id="KW-0812">Transmembrane</keyword>
<keyword id="KW-1133">Transmembrane helix</keyword>
<accession>C0H453</accession>
<feature type="chain" id="PRO_0000386671" description="Uncharacterized membrane protein YqzM">
    <location>
        <begin position="1"/>
        <end position="44"/>
    </location>
</feature>
<feature type="transmembrane region" description="Helical" evidence="1">
    <location>
        <begin position="19"/>
        <end position="39"/>
    </location>
</feature>
<gene>
    <name type="primary">yqzM</name>
    <name type="ordered locus">BSU25569</name>
</gene>
<dbReference type="EMBL" id="AL009126">
    <property type="protein sequence ID" value="CAX52662.1"/>
    <property type="molecule type" value="Genomic_DNA"/>
</dbReference>
<dbReference type="RefSeq" id="WP_003229983.1">
    <property type="nucleotide sequence ID" value="NZ_OZ025638.1"/>
</dbReference>
<dbReference type="RefSeq" id="YP_003097762.1">
    <property type="nucleotide sequence ID" value="NC_000964.3"/>
</dbReference>
<dbReference type="SMR" id="C0H453"/>
<dbReference type="FunCoup" id="C0H453">
    <property type="interactions" value="6"/>
</dbReference>
<dbReference type="STRING" id="224308.BSU25569"/>
<dbReference type="PaxDb" id="224308-BSU25569"/>
<dbReference type="EnsemblBacteria" id="CAX52662">
    <property type="protein sequence ID" value="CAX52662"/>
    <property type="gene ID" value="BSU_25569"/>
</dbReference>
<dbReference type="GeneID" id="8303117"/>
<dbReference type="KEGG" id="bsu:BSU25569"/>
<dbReference type="PATRIC" id="fig|224308.179.peg.2779"/>
<dbReference type="eggNOG" id="ENOG5033DJB">
    <property type="taxonomic scope" value="Bacteria"/>
</dbReference>
<dbReference type="InParanoid" id="C0H453"/>
<dbReference type="BioCyc" id="BSUB:BSU25569-MONOMER"/>
<dbReference type="PRO" id="PR:C0H453"/>
<dbReference type="Proteomes" id="UP000001570">
    <property type="component" value="Chromosome"/>
</dbReference>
<dbReference type="GO" id="GO:0005886">
    <property type="term" value="C:plasma membrane"/>
    <property type="evidence" value="ECO:0007669"/>
    <property type="project" value="UniProtKB-SubCell"/>
</dbReference>
<dbReference type="InterPro" id="IPR025416">
    <property type="entry name" value="YqzM"/>
</dbReference>
<dbReference type="Pfam" id="PF14141">
    <property type="entry name" value="YqzM"/>
    <property type="match status" value="1"/>
</dbReference>
<sequence length="44" mass="4843">MNDFEKNVQSKRNDAVDSAVGFVVSFGFFAFLFVMATVIHLVGS</sequence>
<evidence type="ECO:0000255" key="1"/>
<evidence type="ECO:0000305" key="2"/>
<organism>
    <name type="scientific">Bacillus subtilis (strain 168)</name>
    <dbReference type="NCBI Taxonomy" id="224308"/>
    <lineage>
        <taxon>Bacteria</taxon>
        <taxon>Bacillati</taxon>
        <taxon>Bacillota</taxon>
        <taxon>Bacilli</taxon>
        <taxon>Bacillales</taxon>
        <taxon>Bacillaceae</taxon>
        <taxon>Bacillus</taxon>
    </lineage>
</organism>
<reference key="1">
    <citation type="journal article" date="1997" name="Nature">
        <title>The complete genome sequence of the Gram-positive bacterium Bacillus subtilis.</title>
        <authorList>
            <person name="Kunst F."/>
            <person name="Ogasawara N."/>
            <person name="Moszer I."/>
            <person name="Albertini A.M."/>
            <person name="Alloni G."/>
            <person name="Azevedo V."/>
            <person name="Bertero M.G."/>
            <person name="Bessieres P."/>
            <person name="Bolotin A."/>
            <person name="Borchert S."/>
            <person name="Borriss R."/>
            <person name="Boursier L."/>
            <person name="Brans A."/>
            <person name="Braun M."/>
            <person name="Brignell S.C."/>
            <person name="Bron S."/>
            <person name="Brouillet S."/>
            <person name="Bruschi C.V."/>
            <person name="Caldwell B."/>
            <person name="Capuano V."/>
            <person name="Carter N.M."/>
            <person name="Choi S.-K."/>
            <person name="Codani J.-J."/>
            <person name="Connerton I.F."/>
            <person name="Cummings N.J."/>
            <person name="Daniel R.A."/>
            <person name="Denizot F."/>
            <person name="Devine K.M."/>
            <person name="Duesterhoeft A."/>
            <person name="Ehrlich S.D."/>
            <person name="Emmerson P.T."/>
            <person name="Entian K.-D."/>
            <person name="Errington J."/>
            <person name="Fabret C."/>
            <person name="Ferrari E."/>
            <person name="Foulger D."/>
            <person name="Fritz C."/>
            <person name="Fujita M."/>
            <person name="Fujita Y."/>
            <person name="Fuma S."/>
            <person name="Galizzi A."/>
            <person name="Galleron N."/>
            <person name="Ghim S.-Y."/>
            <person name="Glaser P."/>
            <person name="Goffeau A."/>
            <person name="Golightly E.J."/>
            <person name="Grandi G."/>
            <person name="Guiseppi G."/>
            <person name="Guy B.J."/>
            <person name="Haga K."/>
            <person name="Haiech J."/>
            <person name="Harwood C.R."/>
            <person name="Henaut A."/>
            <person name="Hilbert H."/>
            <person name="Holsappel S."/>
            <person name="Hosono S."/>
            <person name="Hullo M.-F."/>
            <person name="Itaya M."/>
            <person name="Jones L.-M."/>
            <person name="Joris B."/>
            <person name="Karamata D."/>
            <person name="Kasahara Y."/>
            <person name="Klaerr-Blanchard M."/>
            <person name="Klein C."/>
            <person name="Kobayashi Y."/>
            <person name="Koetter P."/>
            <person name="Koningstein G."/>
            <person name="Krogh S."/>
            <person name="Kumano M."/>
            <person name="Kurita K."/>
            <person name="Lapidus A."/>
            <person name="Lardinois S."/>
            <person name="Lauber J."/>
            <person name="Lazarevic V."/>
            <person name="Lee S.-M."/>
            <person name="Levine A."/>
            <person name="Liu H."/>
            <person name="Masuda S."/>
            <person name="Mauel C."/>
            <person name="Medigue C."/>
            <person name="Medina N."/>
            <person name="Mellado R.P."/>
            <person name="Mizuno M."/>
            <person name="Moestl D."/>
            <person name="Nakai S."/>
            <person name="Noback M."/>
            <person name="Noone D."/>
            <person name="O'Reilly M."/>
            <person name="Ogawa K."/>
            <person name="Ogiwara A."/>
            <person name="Oudega B."/>
            <person name="Park S.-H."/>
            <person name="Parro V."/>
            <person name="Pohl T.M."/>
            <person name="Portetelle D."/>
            <person name="Porwollik S."/>
            <person name="Prescott A.M."/>
            <person name="Presecan E."/>
            <person name="Pujic P."/>
            <person name="Purnelle B."/>
            <person name="Rapoport G."/>
            <person name="Rey M."/>
            <person name="Reynolds S."/>
            <person name="Rieger M."/>
            <person name="Rivolta C."/>
            <person name="Rocha E."/>
            <person name="Roche B."/>
            <person name="Rose M."/>
            <person name="Sadaie Y."/>
            <person name="Sato T."/>
            <person name="Scanlan E."/>
            <person name="Schleich S."/>
            <person name="Schroeter R."/>
            <person name="Scoffone F."/>
            <person name="Sekiguchi J."/>
            <person name="Sekowska A."/>
            <person name="Seror S.J."/>
            <person name="Serror P."/>
            <person name="Shin B.-S."/>
            <person name="Soldo B."/>
            <person name="Sorokin A."/>
            <person name="Tacconi E."/>
            <person name="Takagi T."/>
            <person name="Takahashi H."/>
            <person name="Takemaru K."/>
            <person name="Takeuchi M."/>
            <person name="Tamakoshi A."/>
            <person name="Tanaka T."/>
            <person name="Terpstra P."/>
            <person name="Tognoni A."/>
            <person name="Tosato V."/>
            <person name="Uchiyama S."/>
            <person name="Vandenbol M."/>
            <person name="Vannier F."/>
            <person name="Vassarotti A."/>
            <person name="Viari A."/>
            <person name="Wambutt R."/>
            <person name="Wedler E."/>
            <person name="Wedler H."/>
            <person name="Weitzenegger T."/>
            <person name="Winters P."/>
            <person name="Wipat A."/>
            <person name="Yamamoto H."/>
            <person name="Yamane K."/>
            <person name="Yasumoto K."/>
            <person name="Yata K."/>
            <person name="Yoshida K."/>
            <person name="Yoshikawa H.-F."/>
            <person name="Zumstein E."/>
            <person name="Yoshikawa H."/>
            <person name="Danchin A."/>
        </authorList>
    </citation>
    <scope>NUCLEOTIDE SEQUENCE [LARGE SCALE GENOMIC DNA]</scope>
    <source>
        <strain>168</strain>
    </source>
</reference>
<name>YQZM_BACSU</name>